<reference key="1">
    <citation type="submission" date="2008-03" db="EMBL/GenBank/DDBJ databases">
        <title>Complete sequence of chromosome of Methylobacterium radiotolerans JCM 2831.</title>
        <authorList>
            <consortium name="US DOE Joint Genome Institute"/>
            <person name="Copeland A."/>
            <person name="Lucas S."/>
            <person name="Lapidus A."/>
            <person name="Glavina del Rio T."/>
            <person name="Dalin E."/>
            <person name="Tice H."/>
            <person name="Bruce D."/>
            <person name="Goodwin L."/>
            <person name="Pitluck S."/>
            <person name="Kiss H."/>
            <person name="Brettin T."/>
            <person name="Detter J.C."/>
            <person name="Han C."/>
            <person name="Kuske C.R."/>
            <person name="Schmutz J."/>
            <person name="Larimer F."/>
            <person name="Land M."/>
            <person name="Hauser L."/>
            <person name="Kyrpides N."/>
            <person name="Mikhailova N."/>
            <person name="Marx C.J."/>
            <person name="Richardson P."/>
        </authorList>
    </citation>
    <scope>NUCLEOTIDE SEQUENCE [LARGE SCALE GENOMIC DNA]</scope>
    <source>
        <strain>ATCC 27329 / DSM 1819 / JCM 2831 / NBRC 15690 / NCIMB 10815 / 0-1</strain>
    </source>
</reference>
<comment type="function">
    <text evidence="1">Part of the high-affinity ATP-driven potassium transport (or Kdp) system, which catalyzes the hydrolysis of ATP coupled with the electrogenic transport of potassium into the cytoplasm. This subunit binds the periplasmic potassium ions and delivers the ions to the membrane domain of KdpB through an intramembrane tunnel.</text>
</comment>
<comment type="subunit">
    <text evidence="1">The system is composed of three essential subunits: KdpA, KdpB and KdpC.</text>
</comment>
<comment type="subcellular location">
    <subcellularLocation>
        <location evidence="1">Cell inner membrane</location>
        <topology evidence="1">Multi-pass membrane protein</topology>
    </subcellularLocation>
</comment>
<comment type="similarity">
    <text evidence="1">Belongs to the KdpA family.</text>
</comment>
<name>KDPA_METRJ</name>
<dbReference type="EMBL" id="CP001001">
    <property type="protein sequence ID" value="ACB22235.1"/>
    <property type="molecule type" value="Genomic_DNA"/>
</dbReference>
<dbReference type="RefSeq" id="WP_012317233.1">
    <property type="nucleotide sequence ID" value="NC_010505.1"/>
</dbReference>
<dbReference type="SMR" id="B1M7D7"/>
<dbReference type="STRING" id="426355.Mrad2831_0209"/>
<dbReference type="GeneID" id="6136051"/>
<dbReference type="KEGG" id="mrd:Mrad2831_0209"/>
<dbReference type="eggNOG" id="COG2060">
    <property type="taxonomic scope" value="Bacteria"/>
</dbReference>
<dbReference type="HOGENOM" id="CLU_018614_3_0_5"/>
<dbReference type="OrthoDB" id="9763796at2"/>
<dbReference type="Proteomes" id="UP000006589">
    <property type="component" value="Chromosome"/>
</dbReference>
<dbReference type="GO" id="GO:0005886">
    <property type="term" value="C:plasma membrane"/>
    <property type="evidence" value="ECO:0007669"/>
    <property type="project" value="UniProtKB-SubCell"/>
</dbReference>
<dbReference type="GO" id="GO:0008556">
    <property type="term" value="F:P-type potassium transmembrane transporter activity"/>
    <property type="evidence" value="ECO:0007669"/>
    <property type="project" value="InterPro"/>
</dbReference>
<dbReference type="GO" id="GO:0030955">
    <property type="term" value="F:potassium ion binding"/>
    <property type="evidence" value="ECO:0007669"/>
    <property type="project" value="UniProtKB-UniRule"/>
</dbReference>
<dbReference type="HAMAP" id="MF_00275">
    <property type="entry name" value="KdpA"/>
    <property type="match status" value="1"/>
</dbReference>
<dbReference type="InterPro" id="IPR004623">
    <property type="entry name" value="KdpA"/>
</dbReference>
<dbReference type="NCBIfam" id="TIGR00680">
    <property type="entry name" value="kdpA"/>
    <property type="match status" value="1"/>
</dbReference>
<dbReference type="PANTHER" id="PTHR30607">
    <property type="entry name" value="POTASSIUM-TRANSPORTING ATPASE A CHAIN"/>
    <property type="match status" value="1"/>
</dbReference>
<dbReference type="PANTHER" id="PTHR30607:SF2">
    <property type="entry name" value="POTASSIUM-TRANSPORTING ATPASE POTASSIUM-BINDING SUBUNIT"/>
    <property type="match status" value="1"/>
</dbReference>
<dbReference type="Pfam" id="PF03814">
    <property type="entry name" value="KdpA"/>
    <property type="match status" value="1"/>
</dbReference>
<dbReference type="PIRSF" id="PIRSF001294">
    <property type="entry name" value="K_ATPaseA"/>
    <property type="match status" value="1"/>
</dbReference>
<protein>
    <recommendedName>
        <fullName evidence="1">Potassium-transporting ATPase potassium-binding subunit</fullName>
    </recommendedName>
    <alternativeName>
        <fullName evidence="1">ATP phosphohydrolase [potassium-transporting] A chain</fullName>
    </alternativeName>
    <alternativeName>
        <fullName evidence="1">Potassium-binding and translocating subunit A</fullName>
    </alternativeName>
    <alternativeName>
        <fullName evidence="1">Potassium-translocating ATPase A chain</fullName>
    </alternativeName>
</protein>
<gene>
    <name evidence="1" type="primary">kdpA</name>
    <name type="ordered locus">Mrad2831_0209</name>
</gene>
<keyword id="KW-0997">Cell inner membrane</keyword>
<keyword id="KW-1003">Cell membrane</keyword>
<keyword id="KW-0406">Ion transport</keyword>
<keyword id="KW-0472">Membrane</keyword>
<keyword id="KW-0630">Potassium</keyword>
<keyword id="KW-0633">Potassium transport</keyword>
<keyword id="KW-0812">Transmembrane</keyword>
<keyword id="KW-1133">Transmembrane helix</keyword>
<keyword id="KW-0813">Transport</keyword>
<feature type="chain" id="PRO_1000114692" description="Potassium-transporting ATPase potassium-binding subunit">
    <location>
        <begin position="1"/>
        <end position="571"/>
    </location>
</feature>
<feature type="transmembrane region" description="Helical" evidence="1">
    <location>
        <begin position="5"/>
        <end position="25"/>
    </location>
</feature>
<feature type="transmembrane region" description="Helical" evidence="1">
    <location>
        <begin position="64"/>
        <end position="84"/>
    </location>
</feature>
<feature type="transmembrane region" description="Helical" evidence="1">
    <location>
        <begin position="136"/>
        <end position="156"/>
    </location>
</feature>
<feature type="transmembrane region" description="Helical" evidence="1">
    <location>
        <begin position="179"/>
        <end position="199"/>
    </location>
</feature>
<feature type="transmembrane region" description="Helical" evidence="1">
    <location>
        <begin position="254"/>
        <end position="274"/>
    </location>
</feature>
<feature type="transmembrane region" description="Helical" evidence="1">
    <location>
        <begin position="285"/>
        <end position="305"/>
    </location>
</feature>
<feature type="transmembrane region" description="Helical" evidence="1">
    <location>
        <begin position="330"/>
        <end position="350"/>
    </location>
</feature>
<feature type="transmembrane region" description="Helical" evidence="1">
    <location>
        <begin position="357"/>
        <end position="376"/>
    </location>
</feature>
<feature type="transmembrane region" description="Helical" evidence="1">
    <location>
        <begin position="421"/>
        <end position="441"/>
    </location>
</feature>
<feature type="transmembrane region" description="Helical" evidence="1">
    <location>
        <begin position="488"/>
        <end position="508"/>
    </location>
</feature>
<feature type="transmembrane region" description="Helical" evidence="1">
    <location>
        <begin position="527"/>
        <end position="547"/>
    </location>
</feature>
<evidence type="ECO:0000255" key="1">
    <source>
        <dbReference type="HAMAP-Rule" id="MF_00275"/>
    </source>
</evidence>
<accession>B1M7D7</accession>
<sequence>MTLNGWIQIALYGAIVLALVKPLGSYMTRVFTGERTFLSPVLGPIERGLYRVSGIDDRQEQHWLAYTGAVILFHVLGFAVLYAILRLQAVLPLNPADQTAVAPDLAFNTSTSFITNTNWQSYGGETTLSYLSQMLGLTHQNFLSAATGIAVAVALIRGFARASSGTIGSFWVDVTRATLYVLLPICVPYTLFLVWQGIPQTLGAYADATTLEGAKQTIALGPVASQVAIKMLGTNGGGFFNANAAHPFENPTALSNLVQMVSIFAIGAALTNVFGRMVGDERQGWAILGAMGILFLAGVLVTYWAEAHGSSVLNSFGLTGGNMEGKETRFGIAASALFAVITTAASCGAVNAMHDSFTALGGLIPLLNMQLGEIIIGGVGAGLYGMLIFVIVAIFVAGLMVGRTPEYLGKKIEAKEVKMAMLGILCLPLMMLGFTALATVVPAGLAGPANAGPHGFTEILYAYTSAAANNGSAFGGLTANTLFYNSTLAIGMLVGRFFVKIPVLAIAGSLAAKKTVPASAGTFPTHGGLFVGLLVGVILIIGGLTFFPSLALGPVVEHLAGAAGQTFATGG</sequence>
<organism>
    <name type="scientific">Methylobacterium radiotolerans (strain ATCC 27329 / DSM 1819 / JCM 2831 / NBRC 15690 / NCIMB 10815 / 0-1)</name>
    <dbReference type="NCBI Taxonomy" id="426355"/>
    <lineage>
        <taxon>Bacteria</taxon>
        <taxon>Pseudomonadati</taxon>
        <taxon>Pseudomonadota</taxon>
        <taxon>Alphaproteobacteria</taxon>
        <taxon>Hyphomicrobiales</taxon>
        <taxon>Methylobacteriaceae</taxon>
        <taxon>Methylobacterium</taxon>
    </lineage>
</organism>
<proteinExistence type="inferred from homology"/>